<gene>
    <name evidence="1" type="primary">aroC</name>
    <name type="ordered locus">Francci3_3209</name>
</gene>
<proteinExistence type="inferred from homology"/>
<comment type="function">
    <text evidence="1">Catalyzes the anti-1,4-elimination of the C-3 phosphate and the C-6 proR hydrogen from 5-enolpyruvylshikimate-3-phosphate (EPSP) to yield chorismate, which is the branch point compound that serves as the starting substrate for the three terminal pathways of aromatic amino acid biosynthesis. This reaction introduces a second double bond into the aromatic ring system.</text>
</comment>
<comment type="catalytic activity">
    <reaction evidence="1">
        <text>5-O-(1-carboxyvinyl)-3-phosphoshikimate = chorismate + phosphate</text>
        <dbReference type="Rhea" id="RHEA:21020"/>
        <dbReference type="ChEBI" id="CHEBI:29748"/>
        <dbReference type="ChEBI" id="CHEBI:43474"/>
        <dbReference type="ChEBI" id="CHEBI:57701"/>
        <dbReference type="EC" id="4.2.3.5"/>
    </reaction>
</comment>
<comment type="cofactor">
    <cofactor evidence="1">
        <name>FMNH2</name>
        <dbReference type="ChEBI" id="CHEBI:57618"/>
    </cofactor>
    <text evidence="1">Reduced FMN (FMNH(2)).</text>
</comment>
<comment type="pathway">
    <text evidence="1">Metabolic intermediate biosynthesis; chorismate biosynthesis; chorismate from D-erythrose 4-phosphate and phosphoenolpyruvate: step 7/7.</text>
</comment>
<comment type="subunit">
    <text evidence="1">Homotetramer.</text>
</comment>
<comment type="similarity">
    <text evidence="1">Belongs to the chorismate synthase family.</text>
</comment>
<organism>
    <name type="scientific">Frankia casuarinae (strain DSM 45818 / CECT 9043 / HFP020203 / CcI3)</name>
    <dbReference type="NCBI Taxonomy" id="106370"/>
    <lineage>
        <taxon>Bacteria</taxon>
        <taxon>Bacillati</taxon>
        <taxon>Actinomycetota</taxon>
        <taxon>Actinomycetes</taxon>
        <taxon>Frankiales</taxon>
        <taxon>Frankiaceae</taxon>
        <taxon>Frankia</taxon>
    </lineage>
</organism>
<dbReference type="EC" id="4.2.3.5" evidence="1"/>
<dbReference type="EMBL" id="CP000249">
    <property type="protein sequence ID" value="ABD12566.1"/>
    <property type="molecule type" value="Genomic_DNA"/>
</dbReference>
<dbReference type="RefSeq" id="WP_011437594.1">
    <property type="nucleotide sequence ID" value="NZ_JENI01000058.1"/>
</dbReference>
<dbReference type="SMR" id="Q2J826"/>
<dbReference type="STRING" id="106370.Francci3_3209"/>
<dbReference type="KEGG" id="fra:Francci3_3209"/>
<dbReference type="eggNOG" id="COG0082">
    <property type="taxonomic scope" value="Bacteria"/>
</dbReference>
<dbReference type="HOGENOM" id="CLU_034547_2_0_11"/>
<dbReference type="OrthoDB" id="9771806at2"/>
<dbReference type="PhylomeDB" id="Q2J826"/>
<dbReference type="UniPathway" id="UPA00053">
    <property type="reaction ID" value="UER00090"/>
</dbReference>
<dbReference type="Proteomes" id="UP000001937">
    <property type="component" value="Chromosome"/>
</dbReference>
<dbReference type="GO" id="GO:0005829">
    <property type="term" value="C:cytosol"/>
    <property type="evidence" value="ECO:0007669"/>
    <property type="project" value="TreeGrafter"/>
</dbReference>
<dbReference type="GO" id="GO:0004107">
    <property type="term" value="F:chorismate synthase activity"/>
    <property type="evidence" value="ECO:0007669"/>
    <property type="project" value="UniProtKB-UniRule"/>
</dbReference>
<dbReference type="GO" id="GO:0010181">
    <property type="term" value="F:FMN binding"/>
    <property type="evidence" value="ECO:0007669"/>
    <property type="project" value="TreeGrafter"/>
</dbReference>
<dbReference type="GO" id="GO:0008652">
    <property type="term" value="P:amino acid biosynthetic process"/>
    <property type="evidence" value="ECO:0007669"/>
    <property type="project" value="UniProtKB-KW"/>
</dbReference>
<dbReference type="GO" id="GO:0009073">
    <property type="term" value="P:aromatic amino acid family biosynthetic process"/>
    <property type="evidence" value="ECO:0007669"/>
    <property type="project" value="UniProtKB-KW"/>
</dbReference>
<dbReference type="GO" id="GO:0009423">
    <property type="term" value="P:chorismate biosynthetic process"/>
    <property type="evidence" value="ECO:0007669"/>
    <property type="project" value="UniProtKB-UniRule"/>
</dbReference>
<dbReference type="CDD" id="cd07304">
    <property type="entry name" value="Chorismate_synthase"/>
    <property type="match status" value="1"/>
</dbReference>
<dbReference type="FunFam" id="3.60.150.10:FF:000002">
    <property type="entry name" value="Chorismate synthase"/>
    <property type="match status" value="1"/>
</dbReference>
<dbReference type="Gene3D" id="3.60.150.10">
    <property type="entry name" value="Chorismate synthase AroC"/>
    <property type="match status" value="1"/>
</dbReference>
<dbReference type="HAMAP" id="MF_00300">
    <property type="entry name" value="Chorismate_synth"/>
    <property type="match status" value="1"/>
</dbReference>
<dbReference type="InterPro" id="IPR000453">
    <property type="entry name" value="Chorismate_synth"/>
</dbReference>
<dbReference type="InterPro" id="IPR035904">
    <property type="entry name" value="Chorismate_synth_AroC_sf"/>
</dbReference>
<dbReference type="InterPro" id="IPR020541">
    <property type="entry name" value="Chorismate_synthase_CS"/>
</dbReference>
<dbReference type="NCBIfam" id="TIGR00033">
    <property type="entry name" value="aroC"/>
    <property type="match status" value="1"/>
</dbReference>
<dbReference type="NCBIfam" id="NF003793">
    <property type="entry name" value="PRK05382.1"/>
    <property type="match status" value="1"/>
</dbReference>
<dbReference type="PANTHER" id="PTHR21085">
    <property type="entry name" value="CHORISMATE SYNTHASE"/>
    <property type="match status" value="1"/>
</dbReference>
<dbReference type="PANTHER" id="PTHR21085:SF0">
    <property type="entry name" value="CHORISMATE SYNTHASE"/>
    <property type="match status" value="1"/>
</dbReference>
<dbReference type="Pfam" id="PF01264">
    <property type="entry name" value="Chorismate_synt"/>
    <property type="match status" value="1"/>
</dbReference>
<dbReference type="PIRSF" id="PIRSF001456">
    <property type="entry name" value="Chorismate_synth"/>
    <property type="match status" value="1"/>
</dbReference>
<dbReference type="SUPFAM" id="SSF103263">
    <property type="entry name" value="Chorismate synthase, AroC"/>
    <property type="match status" value="1"/>
</dbReference>
<dbReference type="PROSITE" id="PS00787">
    <property type="entry name" value="CHORISMATE_SYNTHASE_1"/>
    <property type="match status" value="1"/>
</dbReference>
<dbReference type="PROSITE" id="PS00789">
    <property type="entry name" value="CHORISMATE_SYNTHASE_3"/>
    <property type="match status" value="1"/>
</dbReference>
<protein>
    <recommendedName>
        <fullName evidence="1">Chorismate synthase</fullName>
        <shortName evidence="1">CS</shortName>
        <ecNumber evidence="1">4.2.3.5</ecNumber>
    </recommendedName>
    <alternativeName>
        <fullName evidence="1">5-enolpyruvylshikimate-3-phosphate phospholyase</fullName>
    </alternativeName>
</protein>
<name>AROC_FRACC</name>
<evidence type="ECO:0000255" key="1">
    <source>
        <dbReference type="HAMAP-Rule" id="MF_00300"/>
    </source>
</evidence>
<evidence type="ECO:0000256" key="2">
    <source>
        <dbReference type="SAM" id="MobiDB-lite"/>
    </source>
</evidence>
<sequence>MVRWLTAGESHGPALVATVEGLPAGIRMTSSDISAELARRRLGHGRGARMSFERDEVELLGGVRHGVTLGGPVSVVVRNTEWPKWERVMSPDPVDPAALAGLGRAAPLTRPRPGHADLAGMQKYGFDDARPVLERASARETAARVALGTAAKALLRQAYGIEVISHVVAIGAVEVPPGVPAPTSLAAVDADPVRCADQATSVRMVAEIDVAHADADTLGGIVEVLAYGCPPGLGSYVHGDRRIDARIAGELMGIQAIKGVEFGDGFTTARRRGSGAHDEIEPAGAGSRRVRRATDRAGGVEGGMTTGEPLRVRVAMKPISSLTRPLSTVDVSTGEAAVAINQRSDVCAVPAAGVVTEAMVALVLADAALEKFGGDSVEETRRNYEGYLKSLVIR</sequence>
<accession>Q2J826</accession>
<reference key="1">
    <citation type="journal article" date="2007" name="Genome Res.">
        <title>Genome characteristics of facultatively symbiotic Frankia sp. strains reflect host range and host plant biogeography.</title>
        <authorList>
            <person name="Normand P."/>
            <person name="Lapierre P."/>
            <person name="Tisa L.S."/>
            <person name="Gogarten J.P."/>
            <person name="Alloisio N."/>
            <person name="Bagnarol E."/>
            <person name="Bassi C.A."/>
            <person name="Berry A.M."/>
            <person name="Bickhart D.M."/>
            <person name="Choisne N."/>
            <person name="Couloux A."/>
            <person name="Cournoyer B."/>
            <person name="Cruveiller S."/>
            <person name="Daubin V."/>
            <person name="Demange N."/>
            <person name="Francino M.P."/>
            <person name="Goltsman E."/>
            <person name="Huang Y."/>
            <person name="Kopp O.R."/>
            <person name="Labarre L."/>
            <person name="Lapidus A."/>
            <person name="Lavire C."/>
            <person name="Marechal J."/>
            <person name="Martinez M."/>
            <person name="Mastronunzio J.E."/>
            <person name="Mullin B.C."/>
            <person name="Niemann J."/>
            <person name="Pujic P."/>
            <person name="Rawnsley T."/>
            <person name="Rouy Z."/>
            <person name="Schenowitz C."/>
            <person name="Sellstedt A."/>
            <person name="Tavares F."/>
            <person name="Tomkins J.P."/>
            <person name="Vallenet D."/>
            <person name="Valverde C."/>
            <person name="Wall L.G."/>
            <person name="Wang Y."/>
            <person name="Medigue C."/>
            <person name="Benson D.R."/>
        </authorList>
    </citation>
    <scope>NUCLEOTIDE SEQUENCE [LARGE SCALE GENOMIC DNA]</scope>
    <source>
        <strain>DSM 45818 / CECT 9043 / HFP020203 / CcI3</strain>
    </source>
</reference>
<keyword id="KW-0028">Amino-acid biosynthesis</keyword>
<keyword id="KW-0057">Aromatic amino acid biosynthesis</keyword>
<keyword id="KW-0274">FAD</keyword>
<keyword id="KW-0285">Flavoprotein</keyword>
<keyword id="KW-0288">FMN</keyword>
<keyword id="KW-0456">Lyase</keyword>
<keyword id="KW-0521">NADP</keyword>
<keyword id="KW-1185">Reference proteome</keyword>
<feature type="chain" id="PRO_0000256293" description="Chorismate synthase">
    <location>
        <begin position="1"/>
        <end position="394"/>
    </location>
</feature>
<feature type="region of interest" description="Disordered" evidence="2">
    <location>
        <begin position="270"/>
        <end position="291"/>
    </location>
</feature>
<feature type="binding site" evidence="1">
    <location>
        <position position="40"/>
    </location>
    <ligand>
        <name>NADP(+)</name>
        <dbReference type="ChEBI" id="CHEBI:58349"/>
    </ligand>
</feature>
<feature type="binding site" evidence="1">
    <location>
        <position position="46"/>
    </location>
    <ligand>
        <name>NADP(+)</name>
        <dbReference type="ChEBI" id="CHEBI:58349"/>
    </ligand>
</feature>
<feature type="binding site" evidence="1">
    <location>
        <begin position="135"/>
        <end position="137"/>
    </location>
    <ligand>
        <name>FMN</name>
        <dbReference type="ChEBI" id="CHEBI:58210"/>
    </ligand>
</feature>
<feature type="binding site" evidence="1">
    <location>
        <begin position="255"/>
        <end position="256"/>
    </location>
    <ligand>
        <name>FMN</name>
        <dbReference type="ChEBI" id="CHEBI:58210"/>
    </ligand>
</feature>
<feature type="binding site" evidence="1">
    <location>
        <position position="302"/>
    </location>
    <ligand>
        <name>FMN</name>
        <dbReference type="ChEBI" id="CHEBI:58210"/>
    </ligand>
</feature>
<feature type="binding site" evidence="1">
    <location>
        <begin position="317"/>
        <end position="321"/>
    </location>
    <ligand>
        <name>FMN</name>
        <dbReference type="ChEBI" id="CHEBI:58210"/>
    </ligand>
</feature>
<feature type="binding site" evidence="1">
    <location>
        <position position="343"/>
    </location>
    <ligand>
        <name>FMN</name>
        <dbReference type="ChEBI" id="CHEBI:58210"/>
    </ligand>
</feature>